<gene>
    <name evidence="1" type="primary">vapC43</name>
    <name type="ordered locus">MT2939</name>
</gene>
<proteinExistence type="inferred from homology"/>
<protein>
    <recommendedName>
        <fullName evidence="1">Ribonuclease VapC43</fullName>
        <shortName evidence="1">RNase VapC43</shortName>
        <ecNumber evidence="1">3.1.-.-</ecNumber>
    </recommendedName>
    <alternativeName>
        <fullName evidence="1">Toxin VapC43</fullName>
    </alternativeName>
</protein>
<dbReference type="EC" id="3.1.-.-" evidence="1"/>
<dbReference type="EMBL" id="AE000516">
    <property type="protein sequence ID" value="AAK47264.1"/>
    <property type="molecule type" value="Genomic_DNA"/>
</dbReference>
<dbReference type="PIR" id="C70923">
    <property type="entry name" value="C70923"/>
</dbReference>
<dbReference type="RefSeq" id="WP_003414624.1">
    <property type="nucleotide sequence ID" value="NZ_KK341227.1"/>
</dbReference>
<dbReference type="SMR" id="P9WF54"/>
<dbReference type="KEGG" id="mtc:MT2939"/>
<dbReference type="PATRIC" id="fig|83331.31.peg.3175"/>
<dbReference type="HOGENOM" id="CLU_146668_1_0_11"/>
<dbReference type="Proteomes" id="UP000001020">
    <property type="component" value="Chromosome"/>
</dbReference>
<dbReference type="GO" id="GO:0000287">
    <property type="term" value="F:magnesium ion binding"/>
    <property type="evidence" value="ECO:0007669"/>
    <property type="project" value="UniProtKB-UniRule"/>
</dbReference>
<dbReference type="GO" id="GO:0004540">
    <property type="term" value="F:RNA nuclease activity"/>
    <property type="evidence" value="ECO:0007669"/>
    <property type="project" value="InterPro"/>
</dbReference>
<dbReference type="GO" id="GO:0045926">
    <property type="term" value="P:negative regulation of growth"/>
    <property type="evidence" value="ECO:0007669"/>
    <property type="project" value="UniProtKB-ARBA"/>
</dbReference>
<dbReference type="Gene3D" id="3.40.50.1010">
    <property type="entry name" value="5'-nuclease"/>
    <property type="match status" value="1"/>
</dbReference>
<dbReference type="HAMAP" id="MF_00265">
    <property type="entry name" value="VapC_Nob1"/>
    <property type="match status" value="1"/>
</dbReference>
<dbReference type="InterPro" id="IPR006226">
    <property type="entry name" value="Mtu_PIN"/>
</dbReference>
<dbReference type="InterPro" id="IPR029060">
    <property type="entry name" value="PIN-like_dom_sf"/>
</dbReference>
<dbReference type="InterPro" id="IPR002716">
    <property type="entry name" value="PIN_dom"/>
</dbReference>
<dbReference type="InterPro" id="IPR022907">
    <property type="entry name" value="VapC_family"/>
</dbReference>
<dbReference type="NCBIfam" id="TIGR00028">
    <property type="entry name" value="Mtu_PIN_fam"/>
    <property type="match status" value="1"/>
</dbReference>
<dbReference type="Pfam" id="PF01850">
    <property type="entry name" value="PIN"/>
    <property type="match status" value="1"/>
</dbReference>
<dbReference type="SUPFAM" id="SSF88723">
    <property type="entry name" value="PIN domain-like"/>
    <property type="match status" value="1"/>
</dbReference>
<keyword id="KW-0378">Hydrolase</keyword>
<keyword id="KW-0460">Magnesium</keyword>
<keyword id="KW-0479">Metal-binding</keyword>
<keyword id="KW-0540">Nuclease</keyword>
<keyword id="KW-1185">Reference proteome</keyword>
<keyword id="KW-1277">Toxin-antitoxin system</keyword>
<feature type="chain" id="PRO_0000428598" description="Ribonuclease VapC43">
    <location>
        <begin position="1"/>
        <end position="147"/>
    </location>
</feature>
<feature type="domain" description="PINc" evidence="1">
    <location>
        <begin position="3"/>
        <end position="139"/>
    </location>
</feature>
<feature type="binding site" evidence="1">
    <location>
        <position position="5"/>
    </location>
    <ligand>
        <name>Mg(2+)</name>
        <dbReference type="ChEBI" id="CHEBI:18420"/>
    </ligand>
</feature>
<feature type="binding site" evidence="1">
    <location>
        <position position="108"/>
    </location>
    <ligand>
        <name>Mg(2+)</name>
        <dbReference type="ChEBI" id="CHEBI:18420"/>
    </ligand>
</feature>
<name>VPC43_MYCTO</name>
<comment type="function">
    <text evidence="1">Toxic component of a type II toxin-antitoxin (TA) system. An RNase. Its toxic effect is neutralized by coexpression with cognate antitoxin VapB43 (By similarity).</text>
</comment>
<comment type="cofactor">
    <cofactor evidence="1">
        <name>Mg(2+)</name>
        <dbReference type="ChEBI" id="CHEBI:18420"/>
    </cofactor>
</comment>
<comment type="similarity">
    <text evidence="1">Belongs to the PINc/VapC protein family.</text>
</comment>
<organism>
    <name type="scientific">Mycobacterium tuberculosis (strain CDC 1551 / Oshkosh)</name>
    <dbReference type="NCBI Taxonomy" id="83331"/>
    <lineage>
        <taxon>Bacteria</taxon>
        <taxon>Bacillati</taxon>
        <taxon>Actinomycetota</taxon>
        <taxon>Actinomycetes</taxon>
        <taxon>Mycobacteriales</taxon>
        <taxon>Mycobacteriaceae</taxon>
        <taxon>Mycobacterium</taxon>
        <taxon>Mycobacterium tuberculosis complex</taxon>
    </lineage>
</organism>
<evidence type="ECO:0000255" key="1">
    <source>
        <dbReference type="HAMAP-Rule" id="MF_00265"/>
    </source>
</evidence>
<sequence>MLCVDVNVLVYAHRADLREHADYRGLLERLANDDEPLGLPDSVLAGFIRVVTNRRVFTEPTSPQDAWQAVDALLAAPAAMRLRPGERHWMAFRQLASDVDANGNDIADAHLAAYALENNATWLSADRGFARFRRLRWRHPLDGQTHL</sequence>
<reference key="1">
    <citation type="journal article" date="2002" name="J. Bacteriol.">
        <title>Whole-genome comparison of Mycobacterium tuberculosis clinical and laboratory strains.</title>
        <authorList>
            <person name="Fleischmann R.D."/>
            <person name="Alland D."/>
            <person name="Eisen J.A."/>
            <person name="Carpenter L."/>
            <person name="White O."/>
            <person name="Peterson J.D."/>
            <person name="DeBoy R.T."/>
            <person name="Dodson R.J."/>
            <person name="Gwinn M.L."/>
            <person name="Haft D.H."/>
            <person name="Hickey E.K."/>
            <person name="Kolonay J.F."/>
            <person name="Nelson W.C."/>
            <person name="Umayam L.A."/>
            <person name="Ermolaeva M.D."/>
            <person name="Salzberg S.L."/>
            <person name="Delcher A."/>
            <person name="Utterback T.R."/>
            <person name="Weidman J.F."/>
            <person name="Khouri H.M."/>
            <person name="Gill J."/>
            <person name="Mikula A."/>
            <person name="Bishai W."/>
            <person name="Jacobs W.R. Jr."/>
            <person name="Venter J.C."/>
            <person name="Fraser C.M."/>
        </authorList>
    </citation>
    <scope>NUCLEOTIDE SEQUENCE [LARGE SCALE GENOMIC DNA]</scope>
    <source>
        <strain>CDC 1551 / Oshkosh</strain>
    </source>
</reference>
<accession>P9WF54</accession>
<accession>L0TCH7</accession>
<accession>P65043</accession>
<accession>Q10800</accession>